<feature type="signal peptide" evidence="2">
    <location>
        <begin position="1"/>
        <end position="39"/>
    </location>
</feature>
<feature type="chain" id="PRO_0000421120" description="Peptidoglycan endopeptidase RipA">
    <location>
        <begin position="40"/>
        <end position="497"/>
    </location>
</feature>
<feature type="domain" description="NlpC/P60" evidence="3">
    <location>
        <begin position="365"/>
        <end position="497"/>
    </location>
</feature>
<feature type="region of interest" description="Disordered" evidence="4">
    <location>
        <begin position="177"/>
        <end position="198"/>
    </location>
</feature>
<feature type="region of interest" description="Disordered" evidence="4">
    <location>
        <begin position="253"/>
        <end position="297"/>
    </location>
</feature>
<feature type="compositionally biased region" description="Basic and acidic residues" evidence="4">
    <location>
        <begin position="177"/>
        <end position="192"/>
    </location>
</feature>
<feature type="compositionally biased region" description="Pro residues" evidence="4">
    <location>
        <begin position="255"/>
        <end position="273"/>
    </location>
</feature>
<feature type="active site" description="Nucleophile" evidence="3">
    <location>
        <position position="408"/>
    </location>
</feature>
<feature type="active site" description="Proton acceptor" evidence="3">
    <location>
        <position position="457"/>
    </location>
</feature>
<feature type="active site" evidence="3">
    <location>
        <position position="469"/>
    </location>
</feature>
<gene>
    <name type="primary">ripA</name>
    <name type="ordered locus">MSMEG_3145</name>
    <name type="ordered locus">MSMEI_3064</name>
</gene>
<name>RIPA_MYCS2</name>
<proteinExistence type="evidence at protein level"/>
<reference key="1">
    <citation type="submission" date="2006-10" db="EMBL/GenBank/DDBJ databases">
        <authorList>
            <person name="Fleischmann R.D."/>
            <person name="Dodson R.J."/>
            <person name="Haft D.H."/>
            <person name="Merkel J.S."/>
            <person name="Nelson W.C."/>
            <person name="Fraser C.M."/>
        </authorList>
    </citation>
    <scope>NUCLEOTIDE SEQUENCE [LARGE SCALE GENOMIC DNA]</scope>
    <source>
        <strain>ATCC 700084 / mc(2)155</strain>
    </source>
</reference>
<reference key="2">
    <citation type="journal article" date="2007" name="Genome Biol.">
        <title>Interrupted coding sequences in Mycobacterium smegmatis: authentic mutations or sequencing errors?</title>
        <authorList>
            <person name="Deshayes C."/>
            <person name="Perrodou E."/>
            <person name="Gallien S."/>
            <person name="Euphrasie D."/>
            <person name="Schaeffer C."/>
            <person name="Van-Dorsselaer A."/>
            <person name="Poch O."/>
            <person name="Lecompte O."/>
            <person name="Reyrat J.-M."/>
        </authorList>
    </citation>
    <scope>NUCLEOTIDE SEQUENCE [LARGE SCALE GENOMIC DNA]</scope>
    <source>
        <strain>ATCC 700084 / mc(2)155</strain>
    </source>
</reference>
<reference key="3">
    <citation type="journal article" date="2009" name="Genome Res.">
        <title>Ortho-proteogenomics: multiple proteomes investigation through orthology and a new MS-based protocol.</title>
        <authorList>
            <person name="Gallien S."/>
            <person name="Perrodou E."/>
            <person name="Carapito C."/>
            <person name="Deshayes C."/>
            <person name="Reyrat J.-M."/>
            <person name="Van Dorsselaer A."/>
            <person name="Poch O."/>
            <person name="Schaeffer C."/>
            <person name="Lecompte O."/>
        </authorList>
    </citation>
    <scope>NUCLEOTIDE SEQUENCE [LARGE SCALE GENOMIC DNA]</scope>
    <source>
        <strain>ATCC 700084 / mc(2)155</strain>
    </source>
</reference>
<reference key="4">
    <citation type="journal article" date="2008" name="PLoS Pathog.">
        <title>A mycobacterial enzyme essential for cell division synergizes with resuscitation-promoting factor.</title>
        <authorList>
            <person name="Hett E.C."/>
            <person name="Chao M.C."/>
            <person name="Deng L.L."/>
            <person name="Rubin E.J."/>
        </authorList>
    </citation>
    <scope>FUNCTION IN CELL DIVISION</scope>
    <scope>DISRUPTION PHENOTYPE</scope>
    <source>
        <strain>ATCC 700084 / mc(2)155</strain>
    </source>
</reference>
<reference key="5">
    <citation type="journal article" date="2012" name="J. Biol. Chem.">
        <title>Septal localization of the Mycobacterium tuberculosis MtrB sensor kinase promotes MtrA regulon expression.</title>
        <authorList>
            <person name="Plocinska R."/>
            <person name="Purushotham G."/>
            <person name="Sarva K."/>
            <person name="Vadrevu I.S."/>
            <person name="Pandeeti E.V."/>
            <person name="Arora N."/>
            <person name="Plocinski P."/>
            <person name="Madiraju M.V."/>
            <person name="Rajagopalan M."/>
        </authorList>
    </citation>
    <scope>INDUCTION</scope>
    <source>
        <strain>ATCC 700084 / mc(2)155</strain>
    </source>
</reference>
<comment type="function">
    <text evidence="1 5">Peptidoglycan endopeptidase that cleaves the bond between D-glutamate and meso-diaminopimelate. Binds and degrades high-molecular weight peptidoglycan. Required for normal separation of daughter cells after cell division and for cell wall integrity (By similarity).</text>
</comment>
<comment type="subunit">
    <text evidence="1">Monomer.</text>
</comment>
<comment type="subcellular location">
    <subcellularLocation>
        <location>Secreted</location>
    </subcellularLocation>
    <text evidence="1">Localizes to the septa.</text>
</comment>
<comment type="induction">
    <text evidence="6">Expression depends on the two-component regulatory system MtrA/MtrB.</text>
</comment>
<comment type="disruption phenotype">
    <text evidence="5">Essential, it cannot be disrupted. Depletion experiments show cells grow as long, branched chains that form clumps. Periodic septa and DNA segregation appear to occur normally along the filaments. Has increased susceptibility to carbenicillin, a cell wall-targeted antibiotic. Depletion effects are reversible.</text>
</comment>
<comment type="similarity">
    <text evidence="3 7">Belongs to the peptidase C40 family.</text>
</comment>
<keyword id="KW-0961">Cell wall biogenesis/degradation</keyword>
<keyword id="KW-0378">Hydrolase</keyword>
<keyword id="KW-0645">Protease</keyword>
<keyword id="KW-1185">Reference proteome</keyword>
<keyword id="KW-0964">Secreted</keyword>
<keyword id="KW-0732">Signal</keyword>
<keyword id="KW-0788">Thiol protease</keyword>
<organism>
    <name type="scientific">Mycolicibacterium smegmatis (strain ATCC 700084 / mc(2)155)</name>
    <name type="common">Mycobacterium smegmatis</name>
    <dbReference type="NCBI Taxonomy" id="246196"/>
    <lineage>
        <taxon>Bacteria</taxon>
        <taxon>Bacillati</taxon>
        <taxon>Actinomycetota</taxon>
        <taxon>Actinomycetes</taxon>
        <taxon>Mycobacteriales</taxon>
        <taxon>Mycobacteriaceae</taxon>
        <taxon>Mycolicibacterium</taxon>
    </lineage>
</organism>
<evidence type="ECO:0000250" key="1"/>
<evidence type="ECO:0000255" key="2"/>
<evidence type="ECO:0000255" key="3">
    <source>
        <dbReference type="PROSITE-ProRule" id="PRU01284"/>
    </source>
</evidence>
<evidence type="ECO:0000256" key="4">
    <source>
        <dbReference type="SAM" id="MobiDB-lite"/>
    </source>
</evidence>
<evidence type="ECO:0000269" key="5">
    <source>
    </source>
</evidence>
<evidence type="ECO:0000269" key="6">
    <source>
    </source>
</evidence>
<evidence type="ECO:0000305" key="7"/>
<protein>
    <recommendedName>
        <fullName>Peptidoglycan endopeptidase RipA</fullName>
        <ecNumber>3.4.-.-</ecNumber>
    </recommendedName>
    <alternativeName>
        <fullName>Resuscitation-promoting factor interaction partner A</fullName>
        <shortName>Rpf-interacting protein A</shortName>
    </alternativeName>
</protein>
<accession>A0QX22</accession>
<dbReference type="EC" id="3.4.-.-"/>
<dbReference type="EMBL" id="CP000480">
    <property type="protein sequence ID" value="ABK70310.1"/>
    <property type="molecule type" value="Genomic_DNA"/>
</dbReference>
<dbReference type="EMBL" id="CP001663">
    <property type="protein sequence ID" value="AFP39528.1"/>
    <property type="molecule type" value="Genomic_DNA"/>
</dbReference>
<dbReference type="RefSeq" id="WP_011728845.1">
    <property type="nucleotide sequence ID" value="NZ_SIJM01000002.1"/>
</dbReference>
<dbReference type="RefSeq" id="YP_887460.1">
    <property type="nucleotide sequence ID" value="NC_008596.1"/>
</dbReference>
<dbReference type="SMR" id="A0QX22"/>
<dbReference type="STRING" id="246196.MSMEG_3145"/>
<dbReference type="PaxDb" id="246196-MSMEI_3064"/>
<dbReference type="KEGG" id="msb:LJ00_15640"/>
<dbReference type="KEGG" id="msg:MSMEI_3064"/>
<dbReference type="KEGG" id="msm:MSMEG_3145"/>
<dbReference type="PATRIC" id="fig|246196.19.peg.3106"/>
<dbReference type="eggNOG" id="COG0791">
    <property type="taxonomic scope" value="Bacteria"/>
</dbReference>
<dbReference type="eggNOG" id="COG3883">
    <property type="taxonomic scope" value="Bacteria"/>
</dbReference>
<dbReference type="OrthoDB" id="4771638at2"/>
<dbReference type="Proteomes" id="UP000000757">
    <property type="component" value="Chromosome"/>
</dbReference>
<dbReference type="Proteomes" id="UP000006158">
    <property type="component" value="Chromosome"/>
</dbReference>
<dbReference type="GO" id="GO:0005576">
    <property type="term" value="C:extracellular region"/>
    <property type="evidence" value="ECO:0007669"/>
    <property type="project" value="UniProtKB-SubCell"/>
</dbReference>
<dbReference type="GO" id="GO:0008234">
    <property type="term" value="F:cysteine-type peptidase activity"/>
    <property type="evidence" value="ECO:0007669"/>
    <property type="project" value="UniProtKB-KW"/>
</dbReference>
<dbReference type="GO" id="GO:0051301">
    <property type="term" value="P:cell division"/>
    <property type="evidence" value="ECO:0000315"/>
    <property type="project" value="UniProtKB"/>
</dbReference>
<dbReference type="GO" id="GO:0016998">
    <property type="term" value="P:cell wall macromolecule catabolic process"/>
    <property type="evidence" value="ECO:0000315"/>
    <property type="project" value="UniProtKB"/>
</dbReference>
<dbReference type="GO" id="GO:0071555">
    <property type="term" value="P:cell wall organization"/>
    <property type="evidence" value="ECO:0007669"/>
    <property type="project" value="UniProtKB-KW"/>
</dbReference>
<dbReference type="GO" id="GO:0071554">
    <property type="term" value="P:cell wall organization or biogenesis"/>
    <property type="evidence" value="ECO:0000316"/>
    <property type="project" value="UniProtKB"/>
</dbReference>
<dbReference type="GO" id="GO:0009253">
    <property type="term" value="P:peptidoglycan catabolic process"/>
    <property type="evidence" value="ECO:0000315"/>
    <property type="project" value="UniProtKB"/>
</dbReference>
<dbReference type="GO" id="GO:0006508">
    <property type="term" value="P:proteolysis"/>
    <property type="evidence" value="ECO:0007669"/>
    <property type="project" value="UniProtKB-KW"/>
</dbReference>
<dbReference type="GO" id="GO:0008360">
    <property type="term" value="P:regulation of cell shape"/>
    <property type="evidence" value="ECO:0000315"/>
    <property type="project" value="UniProtKB"/>
</dbReference>
<dbReference type="FunFam" id="3.90.1720.10:FF:000010">
    <property type="entry name" value="Peptidoglycan endopeptidase RipA"/>
    <property type="match status" value="1"/>
</dbReference>
<dbReference type="Gene3D" id="6.10.250.3150">
    <property type="match status" value="1"/>
</dbReference>
<dbReference type="Gene3D" id="3.90.1720.10">
    <property type="entry name" value="endopeptidase domain like (from Nostoc punctiforme)"/>
    <property type="match status" value="1"/>
</dbReference>
<dbReference type="InterPro" id="IPR000064">
    <property type="entry name" value="NLP_P60_dom"/>
</dbReference>
<dbReference type="InterPro" id="IPR038765">
    <property type="entry name" value="Papain-like_cys_pep_sf"/>
</dbReference>
<dbReference type="InterPro" id="IPR051794">
    <property type="entry name" value="PG_Endopeptidase_C40"/>
</dbReference>
<dbReference type="InterPro" id="IPR049836">
    <property type="entry name" value="RipA"/>
</dbReference>
<dbReference type="NCBIfam" id="NF033741">
    <property type="entry name" value="NlpC_p60_RipA"/>
    <property type="match status" value="1"/>
</dbReference>
<dbReference type="PANTHER" id="PTHR47359:SF3">
    <property type="entry name" value="NLP_P60 DOMAIN-CONTAINING PROTEIN-RELATED"/>
    <property type="match status" value="1"/>
</dbReference>
<dbReference type="PANTHER" id="PTHR47359">
    <property type="entry name" value="PEPTIDOGLYCAN DL-ENDOPEPTIDASE CWLO"/>
    <property type="match status" value="1"/>
</dbReference>
<dbReference type="Pfam" id="PF00877">
    <property type="entry name" value="NLPC_P60"/>
    <property type="match status" value="1"/>
</dbReference>
<dbReference type="SUPFAM" id="SSF54001">
    <property type="entry name" value="Cysteine proteinases"/>
    <property type="match status" value="1"/>
</dbReference>
<dbReference type="PROSITE" id="PS51935">
    <property type="entry name" value="NLPC_P60"/>
    <property type="match status" value="1"/>
</dbReference>
<sequence>MRRTVRALATRVHGRVCAVPLVVGMLLATALYGGGPAAADPAAPDNLATLVAKVASADQKLQELGAAIQTQQETVNKAIVDVQAARDAAAAAQRELEAGQRGVADANAAIEAAQKRFDSFAAATYMNGPSRSYLTATDPADIVNTTATGQALIASSQQVMAKLQRARTEQVNRESAARLAKEKADQAARDAESSQDNAVAALKQAQQTFNAQQGELERLAAERAAAQAELDSVRKVSATGNAAPAAAPAAAPAPAAAPAPVPNSAPAPVPGAQPNPQAAAGNWDRAPSGPASSGQNWAVWDPTLPAIPSAFVSGDPIAIINAVLGIASTSAQVTADMGRSFLQKLGILPTPTGFTNGAIPRVYGREAVEYVIRRGMSQIGVPYSWGGGNAAGPSRGIDSGAGTVGFDCSGLMLYMFAGVGIKLDHYSGSQYNAGRKIPSSQMRRGDMIFYGPNASQHVAMYLGNGQMLEAPYTGSHVKVSPVRTSGMTPYVTRLIEY</sequence>